<proteinExistence type="evidence at protein level"/>
<accession>P20165</accession>
<comment type="function">
    <text>Major venom non-hemorrhagic metalloproteinase.</text>
</comment>
<comment type="catalytic activity">
    <reaction>
        <text>Cleavage of 3-Asn-|-Gln-4, 10-His-|-Leu-11 and 14-Ala-|-Leu-15 in the insulin B chain, and the bond Z-Gly-Pro-|-Leu-Gly-Pro in a small molecule substrate of microbial collagenase.</text>
        <dbReference type="EC" id="3.4.24.53"/>
    </reaction>
</comment>
<comment type="cofactor">
    <cofactor evidence="1">
        <name>Zn(2+)</name>
        <dbReference type="ChEBI" id="CHEBI:29105"/>
    </cofactor>
    <text evidence="1">Binds 1 zinc ion per subunit.</text>
</comment>
<comment type="subunit">
    <text evidence="1">Monomer.</text>
</comment>
<comment type="subcellular location">
    <subcellularLocation>
        <location>Secreted</location>
    </subcellularLocation>
</comment>
<comment type="tissue specificity">
    <text>Expressed by the venom gland.</text>
</comment>
<comment type="similarity">
    <text evidence="5">Belongs to the venom metalloproteinase (M12B) family. P-I subfamily.</text>
</comment>
<reference key="1">
    <citation type="journal article" date="1989" name="J. Biochem.">
        <title>Primary structure of H2-proteinase, a non-hemorrhagic metalloproteinase, isolated from the venom of the habu snake, Trimeresurus flavoviridis.</title>
        <authorList>
            <person name="Takeya H."/>
            <person name="Arakawa M."/>
            <person name="Miyata T."/>
            <person name="Iwanaga S."/>
            <person name="Omori-Satoh T."/>
        </authorList>
    </citation>
    <scope>PROTEIN SEQUENCE</scope>
    <scope>PYROGLUTAMATE FORMATION AT GLN-1</scope>
    <scope>DISULFIDE BONDS</scope>
    <source>
        <tissue>Venom</tissue>
    </source>
</reference>
<reference key="2">
    <citation type="journal article" date="1996" name="J. Biochem.">
        <title>Crystal structure of H2-proteinase from the venom of Trimeresurus flavoviridis.</title>
        <authorList>
            <person name="Kumasaka T."/>
            <person name="Yamamoto M."/>
            <person name="Moriyama H."/>
            <person name="Tanaka N."/>
            <person name="Sato M."/>
            <person name="Katsube Y."/>
            <person name="Yamakawa Y."/>
            <person name="Omori-Satoh T."/>
            <person name="Iwanaga S."/>
            <person name="Ueki T."/>
        </authorList>
    </citation>
    <scope>X-RAY CRYSTALLOGRAPHY (2.2 ANGSTROMS) IN COMPLEX WITH ZINC IONS</scope>
    <scope>METAL-BINDING SITES</scope>
    <scope>DISULFIDE BONDS</scope>
</reference>
<feature type="chain" id="PRO_0000078195" description="Snake venom metalloproteinase trimerelysin-2">
    <location>
        <begin position="1"/>
        <end position="201"/>
    </location>
</feature>
<feature type="domain" description="Peptidase M12B" evidence="3">
    <location>
        <begin position="6"/>
        <end position="201"/>
    </location>
</feature>
<feature type="active site">
    <location>
        <position position="143"/>
    </location>
</feature>
<feature type="binding site">
    <location>
        <position position="142"/>
    </location>
    <ligand>
        <name>Zn(2+)</name>
        <dbReference type="ChEBI" id="CHEBI:29105"/>
        <note>catalytic</note>
    </ligand>
</feature>
<feature type="binding site">
    <location>
        <position position="146"/>
    </location>
    <ligand>
        <name>Zn(2+)</name>
        <dbReference type="ChEBI" id="CHEBI:29105"/>
        <note>catalytic</note>
    </ligand>
</feature>
<feature type="binding site">
    <location>
        <position position="152"/>
    </location>
    <ligand>
        <name>Zn(2+)</name>
        <dbReference type="ChEBI" id="CHEBI:29105"/>
        <note>catalytic</note>
    </ligand>
</feature>
<feature type="modified residue" description="Pyrrolidone carboxylic acid" evidence="4">
    <location>
        <position position="1"/>
    </location>
</feature>
<feature type="glycosylation site" description="N-linked (GlcNAc...) asparagine" evidence="2">
    <location>
        <position position="72"/>
    </location>
</feature>
<feature type="disulfide bond" evidence="3 4">
    <location>
        <begin position="117"/>
        <end position="196"/>
    </location>
</feature>
<feature type="disulfide bond" evidence="3 4">
    <location>
        <begin position="158"/>
        <end position="180"/>
    </location>
</feature>
<feature type="disulfide bond" evidence="3 4">
    <location>
        <begin position="160"/>
        <end position="163"/>
    </location>
</feature>
<feature type="strand" evidence="6">
    <location>
        <begin position="6"/>
        <end position="14"/>
    </location>
</feature>
<feature type="helix" evidence="6">
    <location>
        <begin position="16"/>
        <end position="21"/>
    </location>
</feature>
<feature type="turn" evidence="6">
    <location>
        <begin position="22"/>
        <end position="24"/>
    </location>
</feature>
<feature type="helix" evidence="6">
    <location>
        <begin position="26"/>
        <end position="44"/>
    </location>
</feature>
<feature type="helix" evidence="6">
    <location>
        <begin position="45"/>
        <end position="47"/>
    </location>
</feature>
<feature type="strand" evidence="6">
    <location>
        <begin position="49"/>
        <end position="58"/>
    </location>
</feature>
<feature type="helix" evidence="6">
    <location>
        <begin position="71"/>
        <end position="84"/>
    </location>
</feature>
<feature type="helix" evidence="6">
    <location>
        <begin position="86"/>
        <end position="89"/>
    </location>
</feature>
<feature type="strand" evidence="6">
    <location>
        <begin position="93"/>
        <end position="99"/>
    </location>
</feature>
<feature type="helix" evidence="6">
    <location>
        <begin position="104"/>
        <end position="106"/>
    </location>
</feature>
<feature type="strand" evidence="6">
    <location>
        <begin position="109"/>
        <end position="111"/>
    </location>
</feature>
<feature type="turn" evidence="6">
    <location>
        <begin position="119"/>
        <end position="121"/>
    </location>
</feature>
<feature type="strand" evidence="6">
    <location>
        <begin position="122"/>
        <end position="127"/>
    </location>
</feature>
<feature type="helix" evidence="6">
    <location>
        <begin position="133"/>
        <end position="147"/>
    </location>
</feature>
<feature type="helix" evidence="6">
    <location>
        <begin position="155"/>
        <end position="158"/>
    </location>
</feature>
<feature type="strand" evidence="6">
    <location>
        <begin position="161"/>
        <end position="163"/>
    </location>
</feature>
<feature type="helix" evidence="6">
    <location>
        <begin position="179"/>
        <end position="192"/>
    </location>
</feature>
<feature type="helix" evidence="6">
    <location>
        <begin position="195"/>
        <end position="197"/>
    </location>
</feature>
<name>VM1T2_PROFL</name>
<protein>
    <recommendedName>
        <fullName>Snake venom metalloproteinase trimerelysin-2</fullName>
        <shortName>SVMP</shortName>
        <ecNumber>3.4.24.53</ecNumber>
    </recommendedName>
    <alternativeName>
        <fullName>H2 metalloproteinase</fullName>
        <shortName>H2-proteinase</shortName>
    </alternativeName>
    <alternativeName>
        <fullName>Trimerelysin II</fullName>
    </alternativeName>
</protein>
<dbReference type="EC" id="3.4.24.53"/>
<dbReference type="PIR" id="JU0037">
    <property type="entry name" value="HYTV2"/>
</dbReference>
<dbReference type="PDB" id="1WNI">
    <property type="method" value="X-ray"/>
    <property type="resolution" value="2.20 A"/>
    <property type="chains" value="A=1-201"/>
</dbReference>
<dbReference type="PDBsum" id="1WNI"/>
<dbReference type="SMR" id="P20165"/>
<dbReference type="MEROPS" id="M12.155"/>
<dbReference type="EvolutionaryTrace" id="P20165"/>
<dbReference type="GO" id="GO:0005576">
    <property type="term" value="C:extracellular region"/>
    <property type="evidence" value="ECO:0007669"/>
    <property type="project" value="UniProtKB-SubCell"/>
</dbReference>
<dbReference type="GO" id="GO:0005886">
    <property type="term" value="C:plasma membrane"/>
    <property type="evidence" value="ECO:0007669"/>
    <property type="project" value="TreeGrafter"/>
</dbReference>
<dbReference type="GO" id="GO:0046872">
    <property type="term" value="F:metal ion binding"/>
    <property type="evidence" value="ECO:0007669"/>
    <property type="project" value="UniProtKB-KW"/>
</dbReference>
<dbReference type="GO" id="GO:0004222">
    <property type="term" value="F:metalloendopeptidase activity"/>
    <property type="evidence" value="ECO:0007669"/>
    <property type="project" value="InterPro"/>
</dbReference>
<dbReference type="GO" id="GO:0006508">
    <property type="term" value="P:proteolysis"/>
    <property type="evidence" value="ECO:0007669"/>
    <property type="project" value="UniProtKB-KW"/>
</dbReference>
<dbReference type="CDD" id="cd04269">
    <property type="entry name" value="ZnMc_adamalysin_II_like"/>
    <property type="match status" value="1"/>
</dbReference>
<dbReference type="FunFam" id="3.40.390.10:FF:000002">
    <property type="entry name" value="Disintegrin and metalloproteinase domain-containing protein 22"/>
    <property type="match status" value="1"/>
</dbReference>
<dbReference type="Gene3D" id="3.40.390.10">
    <property type="entry name" value="Collagenase (Catalytic Domain)"/>
    <property type="match status" value="1"/>
</dbReference>
<dbReference type="InterPro" id="IPR024079">
    <property type="entry name" value="MetalloPept_cat_dom_sf"/>
</dbReference>
<dbReference type="InterPro" id="IPR001590">
    <property type="entry name" value="Peptidase_M12B"/>
</dbReference>
<dbReference type="InterPro" id="IPR034027">
    <property type="entry name" value="Reprolysin_adamalysin"/>
</dbReference>
<dbReference type="PANTHER" id="PTHR11905">
    <property type="entry name" value="ADAM A DISINTEGRIN AND METALLOPROTEASE DOMAIN"/>
    <property type="match status" value="1"/>
</dbReference>
<dbReference type="PANTHER" id="PTHR11905:SF32">
    <property type="entry name" value="DISINTEGRIN AND METALLOPROTEINASE DOMAIN-CONTAINING PROTEIN 28"/>
    <property type="match status" value="1"/>
</dbReference>
<dbReference type="Pfam" id="PF01421">
    <property type="entry name" value="Reprolysin"/>
    <property type="match status" value="1"/>
</dbReference>
<dbReference type="SUPFAM" id="SSF55486">
    <property type="entry name" value="Metalloproteases ('zincins'), catalytic domain"/>
    <property type="match status" value="1"/>
</dbReference>
<dbReference type="PROSITE" id="PS50215">
    <property type="entry name" value="ADAM_MEPRO"/>
    <property type="match status" value="1"/>
</dbReference>
<dbReference type="PROSITE" id="PS00142">
    <property type="entry name" value="ZINC_PROTEASE"/>
    <property type="match status" value="1"/>
</dbReference>
<organism>
    <name type="scientific">Protobothrops flavoviridis</name>
    <name type="common">Habu</name>
    <name type="synonym">Trimeresurus flavoviridis</name>
    <dbReference type="NCBI Taxonomy" id="88087"/>
    <lineage>
        <taxon>Eukaryota</taxon>
        <taxon>Metazoa</taxon>
        <taxon>Chordata</taxon>
        <taxon>Craniata</taxon>
        <taxon>Vertebrata</taxon>
        <taxon>Euteleostomi</taxon>
        <taxon>Lepidosauria</taxon>
        <taxon>Squamata</taxon>
        <taxon>Bifurcata</taxon>
        <taxon>Unidentata</taxon>
        <taxon>Episquamata</taxon>
        <taxon>Toxicofera</taxon>
        <taxon>Serpentes</taxon>
        <taxon>Colubroidea</taxon>
        <taxon>Viperidae</taxon>
        <taxon>Crotalinae</taxon>
        <taxon>Protobothrops</taxon>
    </lineage>
</organism>
<keyword id="KW-0002">3D-structure</keyword>
<keyword id="KW-0903">Direct protein sequencing</keyword>
<keyword id="KW-1015">Disulfide bond</keyword>
<keyword id="KW-0325">Glycoprotein</keyword>
<keyword id="KW-0378">Hydrolase</keyword>
<keyword id="KW-0479">Metal-binding</keyword>
<keyword id="KW-0482">Metalloprotease</keyword>
<keyword id="KW-0645">Protease</keyword>
<keyword id="KW-0873">Pyrrolidone carboxylic acid</keyword>
<keyword id="KW-0964">Secreted</keyword>
<keyword id="KW-0862">Zinc</keyword>
<sequence>QRFPQRYIELAIVVDHGMYKKYNQNSDKIKVRVHQMVNHINEMYRPLNIAISLNRLQIWSKKDLITVKSASNVTLESFGNWRETVLLKQQNNDCAHLLTATNLNDNTIGLAYKKGMCNPKLSVGLVQDYSPNVFMVAVTMTHELGHNLGMEHDDKDKCKCEACIMSDVISDKPSKLFSDCSKNDYQTFLTKYNPQCILNAP</sequence>
<evidence type="ECO:0000250" key="1"/>
<evidence type="ECO:0000255" key="2"/>
<evidence type="ECO:0000255" key="3">
    <source>
        <dbReference type="PROSITE-ProRule" id="PRU00276"/>
    </source>
</evidence>
<evidence type="ECO:0000269" key="4">
    <source>
    </source>
</evidence>
<evidence type="ECO:0000305" key="5"/>
<evidence type="ECO:0007829" key="6">
    <source>
        <dbReference type="PDB" id="1WNI"/>
    </source>
</evidence>